<organism>
    <name type="scientific">Mycobacterium tuberculosis (strain ATCC 25618 / H37Rv)</name>
    <dbReference type="NCBI Taxonomy" id="83332"/>
    <lineage>
        <taxon>Bacteria</taxon>
        <taxon>Bacillati</taxon>
        <taxon>Actinomycetota</taxon>
        <taxon>Actinomycetes</taxon>
        <taxon>Mycobacteriales</taxon>
        <taxon>Mycobacteriaceae</taxon>
        <taxon>Mycobacterium</taxon>
        <taxon>Mycobacterium tuberculosis complex</taxon>
    </lineage>
</organism>
<comment type="subunit">
    <text evidence="1">Part of the ESX-4 / type VII secretion system (T7SS), which is composed of cytosolic and membrane components.</text>
</comment>
<comment type="subcellular location">
    <subcellularLocation>
        <location evidence="4">Cell membrane</location>
        <topology evidence="4">Multi-pass membrane protein</topology>
    </subcellularLocation>
</comment>
<feature type="chain" id="PRO_0000393431" description="ESX-4 secretion system protein EccC4">
    <location>
        <begin position="1"/>
        <end position="1236"/>
    </location>
</feature>
<feature type="transmembrane region" description="Helical" evidence="2">
    <location>
        <begin position="32"/>
        <end position="52"/>
    </location>
</feature>
<feature type="transmembrane region" description="Helical" evidence="2">
    <location>
        <begin position="59"/>
        <end position="79"/>
    </location>
</feature>
<feature type="domain" description="FtsK 1" evidence="3">
    <location>
        <begin position="407"/>
        <end position="607"/>
    </location>
</feature>
<feature type="domain" description="FtsK 2" evidence="3">
    <location>
        <begin position="747"/>
        <end position="936"/>
    </location>
</feature>
<feature type="domain" description="FtsK 3" evidence="3">
    <location>
        <begin position="1018"/>
        <end position="1201"/>
    </location>
</feature>
<feature type="binding site" evidence="3">
    <location>
        <begin position="430"/>
        <end position="437"/>
    </location>
    <ligand>
        <name>ATP</name>
        <dbReference type="ChEBI" id="CHEBI:30616"/>
    </ligand>
</feature>
<feature type="binding site" evidence="3">
    <location>
        <begin position="765"/>
        <end position="772"/>
    </location>
    <ligand>
        <name>ATP</name>
        <dbReference type="ChEBI" id="CHEBI:30616"/>
    </ligand>
</feature>
<feature type="binding site" evidence="3">
    <location>
        <begin position="1035"/>
        <end position="1042"/>
    </location>
    <ligand>
        <name>ATP</name>
        <dbReference type="ChEBI" id="CHEBI:30616"/>
    </ligand>
</feature>
<protein>
    <recommendedName>
        <fullName>ESX-4 secretion system protein EccC4</fullName>
    </recommendedName>
    <alternativeName>
        <fullName>ESX conserved component C4</fullName>
    </alternativeName>
    <alternativeName>
        <fullName>Type VII secretion system protein EccC4</fullName>
        <shortName>T7SS protein EccC4</shortName>
    </alternativeName>
</protein>
<reference key="1">
    <citation type="journal article" date="1998" name="Nature">
        <title>Deciphering the biology of Mycobacterium tuberculosis from the complete genome sequence.</title>
        <authorList>
            <person name="Cole S.T."/>
            <person name="Brosch R."/>
            <person name="Parkhill J."/>
            <person name="Garnier T."/>
            <person name="Churcher C.M."/>
            <person name="Harris D.E."/>
            <person name="Gordon S.V."/>
            <person name="Eiglmeier K."/>
            <person name="Gas S."/>
            <person name="Barry C.E. III"/>
            <person name="Tekaia F."/>
            <person name="Badcock K."/>
            <person name="Basham D."/>
            <person name="Brown D."/>
            <person name="Chillingworth T."/>
            <person name="Connor R."/>
            <person name="Davies R.M."/>
            <person name="Devlin K."/>
            <person name="Feltwell T."/>
            <person name="Gentles S."/>
            <person name="Hamlin N."/>
            <person name="Holroyd S."/>
            <person name="Hornsby T."/>
            <person name="Jagels K."/>
            <person name="Krogh A."/>
            <person name="McLean J."/>
            <person name="Moule S."/>
            <person name="Murphy L.D."/>
            <person name="Oliver S."/>
            <person name="Osborne J."/>
            <person name="Quail M.A."/>
            <person name="Rajandream M.A."/>
            <person name="Rogers J."/>
            <person name="Rutter S."/>
            <person name="Seeger K."/>
            <person name="Skelton S."/>
            <person name="Squares S."/>
            <person name="Squares R."/>
            <person name="Sulston J.E."/>
            <person name="Taylor K."/>
            <person name="Whitehead S."/>
            <person name="Barrell B.G."/>
        </authorList>
    </citation>
    <scope>NUCLEOTIDE SEQUENCE [LARGE SCALE GENOMIC DNA]</scope>
    <source>
        <strain>ATCC 25618 / H37Rv</strain>
    </source>
</reference>
<reference key="2">
    <citation type="journal article" date="2009" name="PLoS Pathog.">
        <title>Systematic genetic nomenclature for type VII secretion systems.</title>
        <authorList>
            <person name="Bitter W."/>
            <person name="Houben E.N."/>
            <person name="Bottai D."/>
            <person name="Brodin P."/>
            <person name="Brown E.J."/>
            <person name="Cox J.S."/>
            <person name="Derbyshire K."/>
            <person name="Fortune S.M."/>
            <person name="Gao L.Y."/>
            <person name="Liu J."/>
            <person name="Gey van Pittius N.C."/>
            <person name="Pym A.S."/>
            <person name="Rubin E.J."/>
            <person name="Sherman D.R."/>
            <person name="Cole S.T."/>
            <person name="Brosch R."/>
        </authorList>
    </citation>
    <scope>GENE NAME</scope>
</reference>
<gene>
    <name type="primary">eccC4</name>
    <name type="ordered locus">Rv3447c</name>
</gene>
<name>ECCC4_MYCTU</name>
<keyword id="KW-0067">ATP-binding</keyword>
<keyword id="KW-1003">Cell membrane</keyword>
<keyword id="KW-0472">Membrane</keyword>
<keyword id="KW-0547">Nucleotide-binding</keyword>
<keyword id="KW-1185">Reference proteome</keyword>
<keyword id="KW-0677">Repeat</keyword>
<keyword id="KW-0812">Transmembrane</keyword>
<keyword id="KW-1133">Transmembrane helix</keyword>
<dbReference type="EMBL" id="AL123456">
    <property type="protein sequence ID" value="CCP46269.1"/>
    <property type="molecule type" value="Genomic_DNA"/>
</dbReference>
<dbReference type="PIR" id="E70977">
    <property type="entry name" value="E70977"/>
</dbReference>
<dbReference type="RefSeq" id="NP_217964.1">
    <property type="nucleotide sequence ID" value="NC_000962.3"/>
</dbReference>
<dbReference type="RefSeq" id="WP_003912232.1">
    <property type="nucleotide sequence ID" value="NZ_NVQJ01000065.1"/>
</dbReference>
<dbReference type="SMR" id="P9WNA7"/>
<dbReference type="FunCoup" id="P9WNA7">
    <property type="interactions" value="1"/>
</dbReference>
<dbReference type="STRING" id="83332.Rv3447c"/>
<dbReference type="PaxDb" id="83332-Rv3447c"/>
<dbReference type="GeneID" id="887581"/>
<dbReference type="KEGG" id="mtu:Rv3447c"/>
<dbReference type="KEGG" id="mtv:RVBD_3447c"/>
<dbReference type="TubercuList" id="Rv3447c"/>
<dbReference type="eggNOG" id="COG1674">
    <property type="taxonomic scope" value="Bacteria"/>
</dbReference>
<dbReference type="InParanoid" id="P9WNA7"/>
<dbReference type="OrthoDB" id="9807790at2"/>
<dbReference type="PhylomeDB" id="P9WNA7"/>
<dbReference type="Proteomes" id="UP000001584">
    <property type="component" value="Chromosome"/>
</dbReference>
<dbReference type="GO" id="GO:0005886">
    <property type="term" value="C:plasma membrane"/>
    <property type="evidence" value="ECO:0007005"/>
    <property type="project" value="MTBBASE"/>
</dbReference>
<dbReference type="GO" id="GO:0005524">
    <property type="term" value="F:ATP binding"/>
    <property type="evidence" value="ECO:0007669"/>
    <property type="project" value="UniProtKB-KW"/>
</dbReference>
<dbReference type="GO" id="GO:0016887">
    <property type="term" value="F:ATP hydrolysis activity"/>
    <property type="evidence" value="ECO:0007669"/>
    <property type="project" value="InterPro"/>
</dbReference>
<dbReference type="GO" id="GO:0003677">
    <property type="term" value="F:DNA binding"/>
    <property type="evidence" value="ECO:0007669"/>
    <property type="project" value="InterPro"/>
</dbReference>
<dbReference type="FunFam" id="3.40.50.300:FF:001572">
    <property type="entry name" value="ESX-1 secretion system protein eccCa1"/>
    <property type="match status" value="1"/>
</dbReference>
<dbReference type="Gene3D" id="3.40.50.300">
    <property type="entry name" value="P-loop containing nucleotide triphosphate hydrolases"/>
    <property type="match status" value="3"/>
</dbReference>
<dbReference type="InterPro" id="IPR003593">
    <property type="entry name" value="AAA+_ATPase"/>
</dbReference>
<dbReference type="InterPro" id="IPR023836">
    <property type="entry name" value="EccCa-like_Actinobacteria"/>
</dbReference>
<dbReference type="InterPro" id="IPR023837">
    <property type="entry name" value="EccCb-like_Actinobacteria"/>
</dbReference>
<dbReference type="InterPro" id="IPR050206">
    <property type="entry name" value="FtsK/SpoIIIE/SftA"/>
</dbReference>
<dbReference type="InterPro" id="IPR002543">
    <property type="entry name" value="FtsK_dom"/>
</dbReference>
<dbReference type="InterPro" id="IPR027417">
    <property type="entry name" value="P-loop_NTPase"/>
</dbReference>
<dbReference type="NCBIfam" id="TIGR03924">
    <property type="entry name" value="T7SS_EccC_a"/>
    <property type="match status" value="1"/>
</dbReference>
<dbReference type="NCBIfam" id="TIGR03925">
    <property type="entry name" value="T7SS_EccC_b"/>
    <property type="match status" value="1"/>
</dbReference>
<dbReference type="PANTHER" id="PTHR22683">
    <property type="entry name" value="SPORULATION PROTEIN RELATED"/>
    <property type="match status" value="1"/>
</dbReference>
<dbReference type="PANTHER" id="PTHR22683:SF1">
    <property type="entry name" value="TYPE VII SECRETION SYSTEM PROTEIN ESSC"/>
    <property type="match status" value="1"/>
</dbReference>
<dbReference type="Pfam" id="PF01580">
    <property type="entry name" value="FtsK_SpoIIIE"/>
    <property type="match status" value="3"/>
</dbReference>
<dbReference type="SMART" id="SM00382">
    <property type="entry name" value="AAA"/>
    <property type="match status" value="3"/>
</dbReference>
<dbReference type="SUPFAM" id="SSF52540">
    <property type="entry name" value="P-loop containing nucleoside triphosphate hydrolases"/>
    <property type="match status" value="3"/>
</dbReference>
<dbReference type="PROSITE" id="PS50901">
    <property type="entry name" value="FTSK"/>
    <property type="match status" value="3"/>
</dbReference>
<sequence>MNSGPACATADILVAPPPELRRSEPSSLLIRLLPVVMSVATVGVMVTVFLPGSPATRHPTFLAFPMMMLVSLVVTAVTGRGRRHVSGIHNDRVDYLGYLSVLRTSVTQTAAAQHVSLNWTHPDPATLWTLIGGPRMWERRPGAADFCRIRVGVGSAPLATRLVVGQLPPAQRADPVTRAALRCFLAAHATIADAPIAIPLRVGGPIAIDGDPTKVRGLLRAMICQLAVWHSPEELLIAGVVSDRNRAHWDWLKWLPHNQHPNACDALGPAPMVYSTLAEMQNALAATVLAHVVAIVDTAERGNGAITGVITIEVGARRDGAPPVVRCAGEVTALACPDQLEPQDALVCARRLAAHRVGHSGRTFIRGSGWAELVGIGDVAAFDPSTLWRNVNQHDRLRVPIGVTPDGTAVQLDIKEAAEQGMGPHGLCVGATGSGKSELLRTIALGMMARNSPEVLNLLLVDFKGGATFLDLAGAPHVAAVITNLAEEAPLVARMQDALAGEMSRRQQLLRMAGHLVSVTAYQRARQTGAQLPCLPILFIVVDEFSELLSQHPEFVDVFLAIGRVGRSLGMHLLLASQRLDEGRLRGLETHLSYRMCLKTWSASESRNVLGTQDAYQLPNTPGAGLLQTGTGELIRFQTAFVSGPLRRASPSAVHPVAPPSVRPFTTHAAAPVTAGPVGGTAEVPTPTVLHAVLDRLVGHGPAAHQVWLPPLDEPPMLGALLRDAEPAQAELAVPIGIVDRPFEQSRVPLTIDLSGAAGNVAVVGAPQTGKSTALRTLIMALAATHDAGRVQFYCLDFGGGALAQVDELPHVGAVAGRAQPQLASRMLAELESAVRFREAFFRDHGIDSVARYRQLRAKSAAESFADIFLVIDGWASLRQEFAALEESIVALAAQGLSFGVHVALSAARWAEIRPSLRDQIGSRIELRLADPADSELDRRQAQRVPVDRPGRGLSRDGMHMVIALPDLDGVALRRRSGDPVAPPIPLLPARVDYDSVVARAGDELGAHILLGLEERRGQPVAVDFGRHPHLLVLGDNECGKTAALRTLCREIVRTHTAARAQLLIVDFRHTLLDVIESEHMSGYVSSPAALGAKLSSLVDLLQARMPAPDVSQAQLRARSWWSGPDIYVVVDDYDLVAVSSGNPLMVLLEYLPHARDLGLHLVVARRSGGAARALFEPVLASLRDLGCRALLMSGRPDEGALFGSSRPMPLPPGRGILVTGAGDEQLVQVAWSPPP</sequence>
<accession>P9WNA7</accession>
<accession>L0TCS5</accession>
<accession>O06264</accession>
<accession>Q8VJ07</accession>
<evidence type="ECO:0000250" key="1"/>
<evidence type="ECO:0000255" key="2"/>
<evidence type="ECO:0000255" key="3">
    <source>
        <dbReference type="PROSITE-ProRule" id="PRU00289"/>
    </source>
</evidence>
<evidence type="ECO:0000305" key="4"/>
<proteinExistence type="inferred from homology"/>